<comment type="function">
    <text evidence="1">Endonuclease that removes tRNA introns. Cleaves pre-tRNA at the 5'- and 3'-splice sites to release the intron. The products are an intron and two tRNA half-molecules bearing 2',3' cyclic phosphate and 5'-OH termini. Recognizes a pseudosymmetric substrate in which 2 bulged loops of 3 bases are separated by a stem of 4 bp (By similarity).</text>
</comment>
<comment type="catalytic activity">
    <reaction evidence="2">
        <text>pretRNA = a 3'-half-tRNA molecule with a 5'-OH end + a 5'-half-tRNA molecule with a 2',3'-cyclic phosphate end + an intron with a 2',3'-cyclic phosphate and a 5'-hydroxyl terminus.</text>
        <dbReference type="EC" id="4.6.1.16"/>
    </reaction>
</comment>
<comment type="subunit">
    <text evidence="2">Homodimer.</text>
</comment>
<comment type="similarity">
    <text evidence="2">Belongs to the tRNA-intron endonuclease family. Archaeal long subfamily.</text>
</comment>
<organism>
    <name type="scientific">Methanosarcina barkeri (strain Fusaro / DSM 804)</name>
    <dbReference type="NCBI Taxonomy" id="269797"/>
    <lineage>
        <taxon>Archaea</taxon>
        <taxon>Methanobacteriati</taxon>
        <taxon>Methanobacteriota</taxon>
        <taxon>Stenosarchaea group</taxon>
        <taxon>Methanomicrobia</taxon>
        <taxon>Methanosarcinales</taxon>
        <taxon>Methanosarcinaceae</taxon>
        <taxon>Methanosarcina</taxon>
    </lineage>
</organism>
<protein>
    <recommendedName>
        <fullName evidence="2">tRNA-splicing endonuclease</fullName>
        <ecNumber evidence="2">4.6.1.16</ecNumber>
    </recommendedName>
    <alternativeName>
        <fullName evidence="2">tRNA-intron endonuclease</fullName>
    </alternativeName>
</protein>
<proteinExistence type="inferred from homology"/>
<feature type="chain" id="PRO_0000309819" description="tRNA-splicing endonuclease">
    <location>
        <begin position="1"/>
        <end position="350"/>
    </location>
</feature>
<feature type="active site" evidence="2">
    <location>
        <position position="286"/>
    </location>
</feature>
<feature type="active site" evidence="2">
    <location>
        <position position="297"/>
    </location>
</feature>
<feature type="active site" evidence="2">
    <location>
        <position position="328"/>
    </location>
</feature>
<accession>Q46FK9</accession>
<reference key="1">
    <citation type="journal article" date="2006" name="J. Bacteriol.">
        <title>The Methanosarcina barkeri genome: comparative analysis with Methanosarcina acetivorans and Methanosarcina mazei reveals extensive rearrangement within methanosarcinal genomes.</title>
        <authorList>
            <person name="Maeder D.L."/>
            <person name="Anderson I."/>
            <person name="Brettin T.S."/>
            <person name="Bruce D.C."/>
            <person name="Gilna P."/>
            <person name="Han C.S."/>
            <person name="Lapidus A."/>
            <person name="Metcalf W.W."/>
            <person name="Saunders E."/>
            <person name="Tapia R."/>
            <person name="Sowers K.R."/>
        </authorList>
    </citation>
    <scope>NUCLEOTIDE SEQUENCE [LARGE SCALE GENOMIC DNA]</scope>
    <source>
        <strain>Fusaro / DSM 804</strain>
    </source>
</reference>
<dbReference type="EC" id="4.6.1.16" evidence="2"/>
<dbReference type="EMBL" id="CP000099">
    <property type="protein sequence ID" value="AAZ69333.1"/>
    <property type="molecule type" value="Genomic_DNA"/>
</dbReference>
<dbReference type="SMR" id="Q46FK9"/>
<dbReference type="STRING" id="269797.Mbar_A0349"/>
<dbReference type="PaxDb" id="269797-Mbar_A0349"/>
<dbReference type="KEGG" id="mba:Mbar_A0349"/>
<dbReference type="eggNOG" id="arCOG01701">
    <property type="taxonomic scope" value="Archaea"/>
</dbReference>
<dbReference type="HOGENOM" id="CLU_791347_0_0_2"/>
<dbReference type="OrthoDB" id="46045at2157"/>
<dbReference type="GO" id="GO:0005737">
    <property type="term" value="C:cytoplasm"/>
    <property type="evidence" value="ECO:0007669"/>
    <property type="project" value="TreeGrafter"/>
</dbReference>
<dbReference type="GO" id="GO:0016829">
    <property type="term" value="F:lyase activity"/>
    <property type="evidence" value="ECO:0007669"/>
    <property type="project" value="UniProtKB-KW"/>
</dbReference>
<dbReference type="GO" id="GO:0003676">
    <property type="term" value="F:nucleic acid binding"/>
    <property type="evidence" value="ECO:0007669"/>
    <property type="project" value="InterPro"/>
</dbReference>
<dbReference type="GO" id="GO:0000213">
    <property type="term" value="F:tRNA-intron endonuclease activity"/>
    <property type="evidence" value="ECO:0007669"/>
    <property type="project" value="UniProtKB-UniRule"/>
</dbReference>
<dbReference type="GO" id="GO:0006388">
    <property type="term" value="P:tRNA splicing, via endonucleolytic cleavage and ligation"/>
    <property type="evidence" value="ECO:0007669"/>
    <property type="project" value="UniProtKB-UniRule"/>
</dbReference>
<dbReference type="CDD" id="cd22363">
    <property type="entry name" value="tRNA-intron_lyase_C"/>
    <property type="match status" value="2"/>
</dbReference>
<dbReference type="FunFam" id="3.40.1170.20:FF:000001">
    <property type="entry name" value="tRNA-splicing endonuclease"/>
    <property type="match status" value="1"/>
</dbReference>
<dbReference type="FunFam" id="3.40.1350.10:FF:000006">
    <property type="entry name" value="tRNA-splicing endonuclease"/>
    <property type="match status" value="1"/>
</dbReference>
<dbReference type="Gene3D" id="3.40.1350.10">
    <property type="match status" value="1"/>
</dbReference>
<dbReference type="Gene3D" id="3.40.1350.150">
    <property type="match status" value="1"/>
</dbReference>
<dbReference type="Gene3D" id="3.40.1170.20">
    <property type="entry name" value="tRNA intron endonuclease, N-terminal domain"/>
    <property type="match status" value="1"/>
</dbReference>
<dbReference type="HAMAP" id="MF_01834">
    <property type="entry name" value="EndA_long"/>
    <property type="match status" value="1"/>
</dbReference>
<dbReference type="InterPro" id="IPR011856">
    <property type="entry name" value="tRNA_endonuc-like_dom_sf"/>
</dbReference>
<dbReference type="InterPro" id="IPR036167">
    <property type="entry name" value="tRNA_intron_Endo_cat-like_sf"/>
</dbReference>
<dbReference type="InterPro" id="IPR006677">
    <property type="entry name" value="tRNA_intron_Endonuc_cat-like"/>
</dbReference>
<dbReference type="InterPro" id="IPR006678">
    <property type="entry name" value="tRNA_intron_Endonuc_N"/>
</dbReference>
<dbReference type="InterPro" id="IPR036740">
    <property type="entry name" value="tRNA_intron_Endonuc_N_sf"/>
</dbReference>
<dbReference type="InterPro" id="IPR006676">
    <property type="entry name" value="tRNA_splic"/>
</dbReference>
<dbReference type="InterPro" id="IPR023516">
    <property type="entry name" value="tRNA_splic_arch_long"/>
</dbReference>
<dbReference type="NCBIfam" id="TIGR00324">
    <property type="entry name" value="endA"/>
    <property type="match status" value="2"/>
</dbReference>
<dbReference type="NCBIfam" id="NF006795">
    <property type="entry name" value="PRK09300.1-3"/>
    <property type="match status" value="1"/>
</dbReference>
<dbReference type="PANTHER" id="PTHR21227">
    <property type="entry name" value="TRNA-SPLICING ENDONUCLEASE SUBUNIT SEN2"/>
    <property type="match status" value="1"/>
</dbReference>
<dbReference type="PANTHER" id="PTHR21227:SF0">
    <property type="entry name" value="TRNA-SPLICING ENDONUCLEASE SUBUNIT SEN2"/>
    <property type="match status" value="1"/>
</dbReference>
<dbReference type="Pfam" id="PF01974">
    <property type="entry name" value="tRNA_int_endo"/>
    <property type="match status" value="2"/>
</dbReference>
<dbReference type="Pfam" id="PF02778">
    <property type="entry name" value="tRNA_int_endo_N"/>
    <property type="match status" value="2"/>
</dbReference>
<dbReference type="SUPFAM" id="SSF53032">
    <property type="entry name" value="tRNA-intron endonuclease catalytic domain-like"/>
    <property type="match status" value="2"/>
</dbReference>
<dbReference type="SUPFAM" id="SSF55267">
    <property type="entry name" value="tRNA-intron endonuclease N-terminal domain-like"/>
    <property type="match status" value="2"/>
</dbReference>
<keyword id="KW-0456">Lyase</keyword>
<keyword id="KW-0819">tRNA processing</keyword>
<sequence>MKTQLKGDRVLAEKEAVAEFYKTGYFGRPKGEGLELSLVEAAFLLSRGKLEIELEGTMLDFRYFFEQASLRQPNFELKYIVYKDLKERGYYVQPSAADFRVYPRGSHPGKSAARIFVHVQSERQLLPVKLLQDSVISAENVHKQFILAVVDEESDLTFYEVKTAVPKGEMTEPYPAIKTDATFLEDRVIAWDAQASETLYKRGFYGKMLDSERLQLSLVESLYLFSRGIITVRDRKGKVFSFDEFIEKASEIESFFLRKYSAYKNLRDSGHVVKTGFKFGTNFRVYRKVESIEKIPHSEYLVNAIPADFEFRLSVMSGAVRLANSVRKKMLFAVEKDEEIEYLDISRTKM</sequence>
<gene>
    <name evidence="2" type="primary">endA</name>
    <name type="ordered locus">Mbar_A0349</name>
</gene>
<name>ENDA_METBF</name>
<evidence type="ECO:0000250" key="1"/>
<evidence type="ECO:0000255" key="2">
    <source>
        <dbReference type="HAMAP-Rule" id="MF_01834"/>
    </source>
</evidence>